<name>FRMR_ECO24</name>
<keyword id="KW-0963">Cytoplasm</keyword>
<keyword id="KW-0238">DNA-binding</keyword>
<keyword id="KW-1185">Reference proteome</keyword>
<keyword id="KW-0678">Repressor</keyword>
<keyword id="KW-0804">Transcription</keyword>
<keyword id="KW-0805">Transcription regulation</keyword>
<evidence type="ECO:0000250" key="1">
    <source>
        <dbReference type="UniProtKB" id="P0AAP3"/>
    </source>
</evidence>
<evidence type="ECO:0000305" key="2"/>
<dbReference type="EMBL" id="CP000800">
    <property type="protein sequence ID" value="ABV20643.1"/>
    <property type="molecule type" value="Genomic_DNA"/>
</dbReference>
<dbReference type="RefSeq" id="WP_001141271.1">
    <property type="nucleotide sequence ID" value="NC_009801.1"/>
</dbReference>
<dbReference type="SMR" id="A7ZIA5"/>
<dbReference type="GeneID" id="93777098"/>
<dbReference type="KEGG" id="ecw:EcE24377A_0382"/>
<dbReference type="HOGENOM" id="CLU_130332_3_0_6"/>
<dbReference type="Proteomes" id="UP000001122">
    <property type="component" value="Chromosome"/>
</dbReference>
<dbReference type="GO" id="GO:0005737">
    <property type="term" value="C:cytoplasm"/>
    <property type="evidence" value="ECO:0007669"/>
    <property type="project" value="UniProtKB-SubCell"/>
</dbReference>
<dbReference type="GO" id="GO:0003677">
    <property type="term" value="F:DNA binding"/>
    <property type="evidence" value="ECO:0007669"/>
    <property type="project" value="UniProtKB-KW"/>
</dbReference>
<dbReference type="GO" id="GO:0046872">
    <property type="term" value="F:metal ion binding"/>
    <property type="evidence" value="ECO:0007669"/>
    <property type="project" value="InterPro"/>
</dbReference>
<dbReference type="GO" id="GO:0045892">
    <property type="term" value="P:negative regulation of DNA-templated transcription"/>
    <property type="evidence" value="ECO:0007669"/>
    <property type="project" value="UniProtKB-ARBA"/>
</dbReference>
<dbReference type="CDD" id="cd10153">
    <property type="entry name" value="RcnR-FrmR-like_DUF156"/>
    <property type="match status" value="1"/>
</dbReference>
<dbReference type="FunFam" id="1.20.58.1000:FF:000002">
    <property type="entry name" value="Transcriptional repressor FrmR"/>
    <property type="match status" value="1"/>
</dbReference>
<dbReference type="Gene3D" id="1.20.58.1000">
    <property type="entry name" value="Metal-sensitive repressor, helix protomer"/>
    <property type="match status" value="1"/>
</dbReference>
<dbReference type="InterPro" id="IPR003735">
    <property type="entry name" value="Metal_Tscrpt_repr"/>
</dbReference>
<dbReference type="InterPro" id="IPR038390">
    <property type="entry name" value="Metal_Tscrpt_repr_sf"/>
</dbReference>
<dbReference type="NCBIfam" id="NF008464">
    <property type="entry name" value="PRK11352.1"/>
    <property type="match status" value="1"/>
</dbReference>
<dbReference type="PANTHER" id="PTHR33677:SF5">
    <property type="entry name" value="TRANSCRIPTIONAL REPRESSOR FRMR"/>
    <property type="match status" value="1"/>
</dbReference>
<dbReference type="PANTHER" id="PTHR33677">
    <property type="entry name" value="TRANSCRIPTIONAL REPRESSOR FRMR-RELATED"/>
    <property type="match status" value="1"/>
</dbReference>
<dbReference type="Pfam" id="PF02583">
    <property type="entry name" value="Trns_repr_metal"/>
    <property type="match status" value="1"/>
</dbReference>
<reference key="1">
    <citation type="journal article" date="2008" name="J. Bacteriol.">
        <title>The pangenome structure of Escherichia coli: comparative genomic analysis of E. coli commensal and pathogenic isolates.</title>
        <authorList>
            <person name="Rasko D.A."/>
            <person name="Rosovitz M.J."/>
            <person name="Myers G.S.A."/>
            <person name="Mongodin E.F."/>
            <person name="Fricke W.F."/>
            <person name="Gajer P."/>
            <person name="Crabtree J."/>
            <person name="Sebaihia M."/>
            <person name="Thomson N.R."/>
            <person name="Chaudhuri R."/>
            <person name="Henderson I.R."/>
            <person name="Sperandio V."/>
            <person name="Ravel J."/>
        </authorList>
    </citation>
    <scope>NUCLEOTIDE SEQUENCE [LARGE SCALE GENOMIC DNA]</scope>
    <source>
        <strain>E24377A / ETEC</strain>
    </source>
</reference>
<proteinExistence type="inferred from homology"/>
<sequence length="91" mass="10318">MPSTPEEKKKVLTRVRRIRGQIDALERSLEGDAECRAILQQIAAVRGAANGLMAEVLESHIRETFDRNDCYSREVSQSVDDTIELVRAYLK</sequence>
<gene>
    <name evidence="1" type="primary">frmR</name>
    <name type="ordered locus">EcE24377A_0382</name>
</gene>
<protein>
    <recommendedName>
        <fullName evidence="1">Transcriptional repressor FrmR</fullName>
    </recommendedName>
</protein>
<feature type="chain" id="PRO_0000340123" description="Transcriptional repressor FrmR">
    <location>
        <begin position="1"/>
        <end position="91"/>
    </location>
</feature>
<feature type="site" description="Important for response to formaldehyde" evidence="1">
    <location>
        <position position="2"/>
    </location>
</feature>
<feature type="site" description="Important for response to formaldehyde" evidence="1">
    <location>
        <position position="35"/>
    </location>
</feature>
<accession>A7ZIA5</accession>
<comment type="function">
    <text evidence="1">Formaldehyde sensor. In the absence of formaldehyde, mediates repression of the frmRAB operon. Acts by binding directly to the frmRAB promoter region. In the presence of formaldehyde, it dissociates from the frmRAB promoter region and allows expression of the formaldehyde detoxification system encoded by frmA and frmB.</text>
</comment>
<comment type="subunit">
    <text evidence="1">Homotetramer.</text>
</comment>
<comment type="subcellular location">
    <subcellularLocation>
        <location evidence="1">Cytoplasm</location>
    </subcellularLocation>
</comment>
<comment type="similarity">
    <text evidence="2">Belongs to the FrmR/RcnR family.</text>
</comment>
<organism>
    <name type="scientific">Escherichia coli O139:H28 (strain E24377A / ETEC)</name>
    <dbReference type="NCBI Taxonomy" id="331111"/>
    <lineage>
        <taxon>Bacteria</taxon>
        <taxon>Pseudomonadati</taxon>
        <taxon>Pseudomonadota</taxon>
        <taxon>Gammaproteobacteria</taxon>
        <taxon>Enterobacterales</taxon>
        <taxon>Enterobacteriaceae</taxon>
        <taxon>Escherichia</taxon>
    </lineage>
</organism>